<protein>
    <recommendedName>
        <fullName evidence="1">Tryptophan--tRNA ligase</fullName>
        <ecNumber evidence="1">6.1.1.2</ecNumber>
    </recommendedName>
    <alternativeName>
        <fullName evidence="1">Tryptophanyl-tRNA synthetase</fullName>
        <shortName evidence="1">TrpRS</shortName>
    </alternativeName>
</protein>
<gene>
    <name evidence="1" type="primary">trpS</name>
    <name type="ordered locus">LMOf2365_2231</name>
</gene>
<reference key="1">
    <citation type="journal article" date="2004" name="Nucleic Acids Res.">
        <title>Whole genome comparisons of serotype 4b and 1/2a strains of the food-borne pathogen Listeria monocytogenes reveal new insights into the core genome components of this species.</title>
        <authorList>
            <person name="Nelson K.E."/>
            <person name="Fouts D.E."/>
            <person name="Mongodin E.F."/>
            <person name="Ravel J."/>
            <person name="DeBoy R.T."/>
            <person name="Kolonay J.F."/>
            <person name="Rasko D.A."/>
            <person name="Angiuoli S.V."/>
            <person name="Gill S.R."/>
            <person name="Paulsen I.T."/>
            <person name="Peterson J.D."/>
            <person name="White O."/>
            <person name="Nelson W.C."/>
            <person name="Nierman W.C."/>
            <person name="Beanan M.J."/>
            <person name="Brinkac L.M."/>
            <person name="Daugherty S.C."/>
            <person name="Dodson R.J."/>
            <person name="Durkin A.S."/>
            <person name="Madupu R."/>
            <person name="Haft D.H."/>
            <person name="Selengut J."/>
            <person name="Van Aken S.E."/>
            <person name="Khouri H.M."/>
            <person name="Fedorova N."/>
            <person name="Forberger H.A."/>
            <person name="Tran B."/>
            <person name="Kathariou S."/>
            <person name="Wonderling L.D."/>
            <person name="Uhlich G.A."/>
            <person name="Bayles D.O."/>
            <person name="Luchansky J.B."/>
            <person name="Fraser C.M."/>
        </authorList>
    </citation>
    <scope>NUCLEOTIDE SEQUENCE [LARGE SCALE GENOMIC DNA]</scope>
    <source>
        <strain>F2365</strain>
    </source>
</reference>
<comment type="function">
    <text evidence="1">Catalyzes the attachment of tryptophan to tRNA(Trp).</text>
</comment>
<comment type="catalytic activity">
    <reaction evidence="1">
        <text>tRNA(Trp) + L-tryptophan + ATP = L-tryptophyl-tRNA(Trp) + AMP + diphosphate + H(+)</text>
        <dbReference type="Rhea" id="RHEA:24080"/>
        <dbReference type="Rhea" id="RHEA-COMP:9671"/>
        <dbReference type="Rhea" id="RHEA-COMP:9705"/>
        <dbReference type="ChEBI" id="CHEBI:15378"/>
        <dbReference type="ChEBI" id="CHEBI:30616"/>
        <dbReference type="ChEBI" id="CHEBI:33019"/>
        <dbReference type="ChEBI" id="CHEBI:57912"/>
        <dbReference type="ChEBI" id="CHEBI:78442"/>
        <dbReference type="ChEBI" id="CHEBI:78535"/>
        <dbReference type="ChEBI" id="CHEBI:456215"/>
        <dbReference type="EC" id="6.1.1.2"/>
    </reaction>
</comment>
<comment type="subunit">
    <text evidence="1">Homodimer.</text>
</comment>
<comment type="subcellular location">
    <subcellularLocation>
        <location evidence="1">Cytoplasm</location>
    </subcellularLocation>
</comment>
<comment type="similarity">
    <text evidence="1">Belongs to the class-I aminoacyl-tRNA synthetase family.</text>
</comment>
<organism>
    <name type="scientific">Listeria monocytogenes serotype 4b (strain F2365)</name>
    <dbReference type="NCBI Taxonomy" id="265669"/>
    <lineage>
        <taxon>Bacteria</taxon>
        <taxon>Bacillati</taxon>
        <taxon>Bacillota</taxon>
        <taxon>Bacilli</taxon>
        <taxon>Bacillales</taxon>
        <taxon>Listeriaceae</taxon>
        <taxon>Listeria</taxon>
    </lineage>
</organism>
<accession>Q71XG7</accession>
<dbReference type="EC" id="6.1.1.2" evidence="1"/>
<dbReference type="EMBL" id="AE017262">
    <property type="protein sequence ID" value="AAT04998.1"/>
    <property type="molecule type" value="Genomic_DNA"/>
</dbReference>
<dbReference type="RefSeq" id="WP_003724614.1">
    <property type="nucleotide sequence ID" value="NC_002973.6"/>
</dbReference>
<dbReference type="SMR" id="Q71XG7"/>
<dbReference type="KEGG" id="lmf:LMOf2365_2231"/>
<dbReference type="HOGENOM" id="CLU_029244_1_1_9"/>
<dbReference type="GO" id="GO:0005829">
    <property type="term" value="C:cytosol"/>
    <property type="evidence" value="ECO:0007669"/>
    <property type="project" value="TreeGrafter"/>
</dbReference>
<dbReference type="GO" id="GO:0005524">
    <property type="term" value="F:ATP binding"/>
    <property type="evidence" value="ECO:0007669"/>
    <property type="project" value="UniProtKB-UniRule"/>
</dbReference>
<dbReference type="GO" id="GO:0004830">
    <property type="term" value="F:tryptophan-tRNA ligase activity"/>
    <property type="evidence" value="ECO:0007669"/>
    <property type="project" value="UniProtKB-UniRule"/>
</dbReference>
<dbReference type="GO" id="GO:0006436">
    <property type="term" value="P:tryptophanyl-tRNA aminoacylation"/>
    <property type="evidence" value="ECO:0007669"/>
    <property type="project" value="UniProtKB-UniRule"/>
</dbReference>
<dbReference type="CDD" id="cd00806">
    <property type="entry name" value="TrpRS_core"/>
    <property type="match status" value="1"/>
</dbReference>
<dbReference type="FunFam" id="1.10.240.10:FF:000002">
    <property type="entry name" value="Tryptophan--tRNA ligase"/>
    <property type="match status" value="1"/>
</dbReference>
<dbReference type="Gene3D" id="3.40.50.620">
    <property type="entry name" value="HUPs"/>
    <property type="match status" value="1"/>
</dbReference>
<dbReference type="Gene3D" id="1.10.240.10">
    <property type="entry name" value="Tyrosyl-Transfer RNA Synthetase"/>
    <property type="match status" value="1"/>
</dbReference>
<dbReference type="HAMAP" id="MF_00140_B">
    <property type="entry name" value="Trp_tRNA_synth_B"/>
    <property type="match status" value="1"/>
</dbReference>
<dbReference type="InterPro" id="IPR001412">
    <property type="entry name" value="aa-tRNA-synth_I_CS"/>
</dbReference>
<dbReference type="InterPro" id="IPR002305">
    <property type="entry name" value="aa-tRNA-synth_Ic"/>
</dbReference>
<dbReference type="InterPro" id="IPR014729">
    <property type="entry name" value="Rossmann-like_a/b/a_fold"/>
</dbReference>
<dbReference type="InterPro" id="IPR002306">
    <property type="entry name" value="Trp-tRNA-ligase"/>
</dbReference>
<dbReference type="InterPro" id="IPR024109">
    <property type="entry name" value="Trp-tRNA-ligase_bac-type"/>
</dbReference>
<dbReference type="InterPro" id="IPR050203">
    <property type="entry name" value="Trp-tRNA_synthetase"/>
</dbReference>
<dbReference type="NCBIfam" id="TIGR00233">
    <property type="entry name" value="trpS"/>
    <property type="match status" value="1"/>
</dbReference>
<dbReference type="PANTHER" id="PTHR43766">
    <property type="entry name" value="TRYPTOPHAN--TRNA LIGASE, MITOCHONDRIAL"/>
    <property type="match status" value="1"/>
</dbReference>
<dbReference type="PANTHER" id="PTHR43766:SF1">
    <property type="entry name" value="TRYPTOPHAN--TRNA LIGASE, MITOCHONDRIAL"/>
    <property type="match status" value="1"/>
</dbReference>
<dbReference type="Pfam" id="PF00579">
    <property type="entry name" value="tRNA-synt_1b"/>
    <property type="match status" value="1"/>
</dbReference>
<dbReference type="PRINTS" id="PR01039">
    <property type="entry name" value="TRNASYNTHTRP"/>
</dbReference>
<dbReference type="SUPFAM" id="SSF52374">
    <property type="entry name" value="Nucleotidylyl transferase"/>
    <property type="match status" value="1"/>
</dbReference>
<dbReference type="PROSITE" id="PS00178">
    <property type="entry name" value="AA_TRNA_LIGASE_I"/>
    <property type="match status" value="1"/>
</dbReference>
<feature type="chain" id="PRO_0000136643" description="Tryptophan--tRNA ligase">
    <location>
        <begin position="1"/>
        <end position="331"/>
    </location>
</feature>
<feature type="short sequence motif" description="'HIGH' region" evidence="1">
    <location>
        <begin position="11"/>
        <end position="19"/>
    </location>
</feature>
<feature type="short sequence motif" description="'KMSKS' region" evidence="1">
    <location>
        <begin position="193"/>
        <end position="197"/>
    </location>
</feature>
<feature type="binding site" evidence="1">
    <location>
        <begin position="10"/>
        <end position="12"/>
    </location>
    <ligand>
        <name>ATP</name>
        <dbReference type="ChEBI" id="CHEBI:30616"/>
    </ligand>
</feature>
<feature type="binding site" evidence="1">
    <location>
        <begin position="18"/>
        <end position="19"/>
    </location>
    <ligand>
        <name>ATP</name>
        <dbReference type="ChEBI" id="CHEBI:30616"/>
    </ligand>
</feature>
<feature type="binding site" evidence="1">
    <location>
        <position position="133"/>
    </location>
    <ligand>
        <name>L-tryptophan</name>
        <dbReference type="ChEBI" id="CHEBI:57912"/>
    </ligand>
</feature>
<feature type="binding site" evidence="1">
    <location>
        <begin position="145"/>
        <end position="147"/>
    </location>
    <ligand>
        <name>ATP</name>
        <dbReference type="ChEBI" id="CHEBI:30616"/>
    </ligand>
</feature>
<feature type="binding site" evidence="1">
    <location>
        <position position="184"/>
    </location>
    <ligand>
        <name>ATP</name>
        <dbReference type="ChEBI" id="CHEBI:30616"/>
    </ligand>
</feature>
<feature type="binding site" evidence="1">
    <location>
        <begin position="193"/>
        <end position="197"/>
    </location>
    <ligand>
        <name>ATP</name>
        <dbReference type="ChEBI" id="CHEBI:30616"/>
    </ligand>
</feature>
<proteinExistence type="inferred from homology"/>
<name>SYW_LISMF</name>
<keyword id="KW-0030">Aminoacyl-tRNA synthetase</keyword>
<keyword id="KW-0067">ATP-binding</keyword>
<keyword id="KW-0963">Cytoplasm</keyword>
<keyword id="KW-0436">Ligase</keyword>
<keyword id="KW-0547">Nucleotide-binding</keyword>
<keyword id="KW-0648">Protein biosynthesis</keyword>
<evidence type="ECO:0000255" key="1">
    <source>
        <dbReference type="HAMAP-Rule" id="MF_00140"/>
    </source>
</evidence>
<sequence>MKKVIFSGIQPSGQLTLGNYIGALKQFGQFQDEYECFYCIVDEHAITVPQDRLKLREQTRSLAALYLAVGLDPEKATLFIQSEVAAHAQAAWILQCNVYIGELERMTQFKDKSDGKAGVSAGLLTYPPLMAADILLYQTDLVPVGEDQKQHIELTRDLAERFNKKHADIFTMPEVFIPKQGARVMSLQDPTKKMSKSDANLKNAIFLLDPPATIRKKIKSAVTDSSGIIEYNKEEKPGVSNLLTIYSVITGETISTIEEKYVGKGYGDFKTDLAELVVAELEPIQERYYAYLKSEELDTILDAGAEKAARVANKTLKKMENGVGLGRKRRR</sequence>